<proteinExistence type="evidence at protein level"/>
<dbReference type="EMBL" id="AF074015">
    <property type="protein sequence ID" value="AAC31952.1"/>
    <property type="molecule type" value="mRNA"/>
</dbReference>
<dbReference type="EMBL" id="AF112345">
    <property type="protein sequence ID" value="AAF21944.1"/>
    <property type="molecule type" value="mRNA"/>
</dbReference>
<dbReference type="EMBL" id="AF172723">
    <property type="protein sequence ID" value="AAF61638.1"/>
    <property type="molecule type" value="Genomic_DNA"/>
</dbReference>
<dbReference type="EMBL" id="AY358325">
    <property type="protein sequence ID" value="AAQ88691.1"/>
    <property type="molecule type" value="mRNA"/>
</dbReference>
<dbReference type="EMBL" id="AK314255">
    <property type="protein sequence ID" value="BAG36921.1"/>
    <property type="molecule type" value="mRNA"/>
</dbReference>
<dbReference type="EMBL" id="AL160282">
    <property type="status" value="NOT_ANNOTATED_CDS"/>
    <property type="molecule type" value="Genomic_DNA"/>
</dbReference>
<dbReference type="EMBL" id="CH471244">
    <property type="protein sequence ID" value="EAW71425.1"/>
    <property type="molecule type" value="Genomic_DNA"/>
</dbReference>
<dbReference type="EMBL" id="BC140831">
    <property type="protein sequence ID" value="AAI40832.1"/>
    <property type="molecule type" value="mRNA"/>
</dbReference>
<dbReference type="EMBL" id="BC144637">
    <property type="protein sequence ID" value="AAI44638.1"/>
    <property type="molecule type" value="mRNA"/>
</dbReference>
<dbReference type="CCDS" id="CCDS72869.1">
    <molecule id="O75578-1"/>
</dbReference>
<dbReference type="CCDS" id="CCDS76204.1">
    <molecule id="O75578-3"/>
</dbReference>
<dbReference type="RefSeq" id="NP_001289969.1">
    <property type="nucleotide sequence ID" value="NM_001303040.1"/>
</dbReference>
<dbReference type="RefSeq" id="NP_001289970.1">
    <molecule id="O75578-3"/>
    <property type="nucleotide sequence ID" value="NM_001303041.2"/>
</dbReference>
<dbReference type="RefSeq" id="NP_003628.2">
    <molecule id="O75578-1"/>
    <property type="nucleotide sequence ID" value="NM_003637.4"/>
</dbReference>
<dbReference type="SMR" id="O75578"/>
<dbReference type="BioGRID" id="114087">
    <property type="interactions" value="4"/>
</dbReference>
<dbReference type="ComplexPortal" id="CPX-1817">
    <property type="entry name" value="Integrin alpha10-beta1 complex"/>
</dbReference>
<dbReference type="CORUM" id="O75578"/>
<dbReference type="FunCoup" id="O75578">
    <property type="interactions" value="561"/>
</dbReference>
<dbReference type="IntAct" id="O75578">
    <property type="interactions" value="1"/>
</dbReference>
<dbReference type="STRING" id="9606.ENSP00000358310"/>
<dbReference type="BindingDB" id="O75578"/>
<dbReference type="ChEMBL" id="CHEMBL5882"/>
<dbReference type="GlyCosmos" id="O75578">
    <property type="glycosylation" value="11 sites, No reported glycans"/>
</dbReference>
<dbReference type="GlyGen" id="O75578">
    <property type="glycosylation" value="11 sites"/>
</dbReference>
<dbReference type="iPTMnet" id="O75578"/>
<dbReference type="PhosphoSitePlus" id="O75578"/>
<dbReference type="BioMuta" id="ITGA10"/>
<dbReference type="MassIVE" id="O75578"/>
<dbReference type="PaxDb" id="9606-ENSP00000358310"/>
<dbReference type="PeptideAtlas" id="O75578"/>
<dbReference type="ProteomicsDB" id="3449"/>
<dbReference type="ProteomicsDB" id="50095">
    <molecule id="O75578-1"/>
</dbReference>
<dbReference type="ProteomicsDB" id="50096">
    <molecule id="O75578-2"/>
</dbReference>
<dbReference type="Antibodypedia" id="20229">
    <property type="antibodies" value="42 antibodies from 17 providers"/>
</dbReference>
<dbReference type="DNASU" id="8515"/>
<dbReference type="Ensembl" id="ENST00000369304.8">
    <molecule id="O75578-1"/>
    <property type="protein sequence ID" value="ENSP00000358310.3"/>
    <property type="gene ID" value="ENSG00000143127.13"/>
</dbReference>
<dbReference type="Ensembl" id="ENST00000539363.2">
    <molecule id="O75578-3"/>
    <property type="protein sequence ID" value="ENSP00000439894.1"/>
    <property type="gene ID" value="ENSG00000143127.13"/>
</dbReference>
<dbReference type="GeneID" id="8515"/>
<dbReference type="KEGG" id="hsa:8515"/>
<dbReference type="MANE-Select" id="ENST00000369304.8">
    <property type="protein sequence ID" value="ENSP00000358310.3"/>
    <property type="RefSeq nucleotide sequence ID" value="NM_003637.5"/>
    <property type="RefSeq protein sequence ID" value="NP_003628.2"/>
</dbReference>
<dbReference type="UCSC" id="uc001eoa.4">
    <molecule id="O75578-1"/>
    <property type="organism name" value="human"/>
</dbReference>
<dbReference type="AGR" id="HGNC:6135"/>
<dbReference type="CTD" id="8515"/>
<dbReference type="DisGeNET" id="8515"/>
<dbReference type="GeneCards" id="ITGA10"/>
<dbReference type="HGNC" id="HGNC:6135">
    <property type="gene designation" value="ITGA10"/>
</dbReference>
<dbReference type="HPA" id="ENSG00000143127">
    <property type="expression patterns" value="Low tissue specificity"/>
</dbReference>
<dbReference type="MIM" id="604042">
    <property type="type" value="gene"/>
</dbReference>
<dbReference type="neXtProt" id="NX_O75578"/>
<dbReference type="OpenTargets" id="ENSG00000143127"/>
<dbReference type="PharmGKB" id="PA29936"/>
<dbReference type="VEuPathDB" id="HostDB:ENSG00000143127"/>
<dbReference type="eggNOG" id="KOG3637">
    <property type="taxonomic scope" value="Eukaryota"/>
</dbReference>
<dbReference type="GeneTree" id="ENSGT00940000158423"/>
<dbReference type="HOGENOM" id="CLU_004111_2_0_1"/>
<dbReference type="InParanoid" id="O75578"/>
<dbReference type="OMA" id="IVGAYDW"/>
<dbReference type="OrthoDB" id="5317514at2759"/>
<dbReference type="PAN-GO" id="O75578">
    <property type="GO annotations" value="7 GO annotations based on evolutionary models"/>
</dbReference>
<dbReference type="PhylomeDB" id="O75578"/>
<dbReference type="TreeFam" id="TF105391"/>
<dbReference type="PathwayCommons" id="O75578"/>
<dbReference type="Reactome" id="R-HSA-216083">
    <property type="pathway name" value="Integrin cell surface interactions"/>
</dbReference>
<dbReference type="Reactome" id="R-HSA-447041">
    <property type="pathway name" value="CHL1 interactions"/>
</dbReference>
<dbReference type="Reactome" id="R-HSA-75892">
    <property type="pathway name" value="Platelet Adhesion to exposed collagen"/>
</dbReference>
<dbReference type="SignaLink" id="O75578"/>
<dbReference type="SIGNOR" id="O75578"/>
<dbReference type="BioGRID-ORCS" id="8515">
    <property type="hits" value="20 hits in 1149 CRISPR screens"/>
</dbReference>
<dbReference type="ChiTaRS" id="ITGA10">
    <property type="organism name" value="human"/>
</dbReference>
<dbReference type="GeneWiki" id="ITGA10"/>
<dbReference type="GenomeRNAi" id="8515"/>
<dbReference type="Pharos" id="O75578">
    <property type="development level" value="Tbio"/>
</dbReference>
<dbReference type="PRO" id="PR:O75578"/>
<dbReference type="Proteomes" id="UP000005640">
    <property type="component" value="Chromosome 1"/>
</dbReference>
<dbReference type="RNAct" id="O75578">
    <property type="molecule type" value="protein"/>
</dbReference>
<dbReference type="Bgee" id="ENSG00000143127">
    <property type="expression patterns" value="Expressed in tibia and 129 other cell types or tissues"/>
</dbReference>
<dbReference type="GO" id="GO:0009897">
    <property type="term" value="C:external side of plasma membrane"/>
    <property type="evidence" value="ECO:0000318"/>
    <property type="project" value="GO_Central"/>
</dbReference>
<dbReference type="GO" id="GO:0034680">
    <property type="term" value="C:integrin alpha10-beta1 complex"/>
    <property type="evidence" value="ECO:0000314"/>
    <property type="project" value="UniProtKB"/>
</dbReference>
<dbReference type="GO" id="GO:0008305">
    <property type="term" value="C:integrin complex"/>
    <property type="evidence" value="ECO:0000318"/>
    <property type="project" value="GO_Central"/>
</dbReference>
<dbReference type="GO" id="GO:0005886">
    <property type="term" value="C:plasma membrane"/>
    <property type="evidence" value="ECO:0000304"/>
    <property type="project" value="Reactome"/>
</dbReference>
<dbReference type="GO" id="GO:0005518">
    <property type="term" value="F:collagen binding"/>
    <property type="evidence" value="ECO:0000304"/>
    <property type="project" value="ProtInc"/>
</dbReference>
<dbReference type="GO" id="GO:0098639">
    <property type="term" value="F:collagen binding involved in cell-matrix adhesion"/>
    <property type="evidence" value="ECO:0000315"/>
    <property type="project" value="UniProtKB"/>
</dbReference>
<dbReference type="GO" id="GO:0005178">
    <property type="term" value="F:integrin binding"/>
    <property type="evidence" value="ECO:0000318"/>
    <property type="project" value="GO_Central"/>
</dbReference>
<dbReference type="GO" id="GO:0046872">
    <property type="term" value="F:metal ion binding"/>
    <property type="evidence" value="ECO:0007669"/>
    <property type="project" value="UniProtKB-KW"/>
</dbReference>
<dbReference type="GO" id="GO:0033627">
    <property type="term" value="P:cell adhesion mediated by integrin"/>
    <property type="evidence" value="ECO:0000318"/>
    <property type="project" value="GO_Central"/>
</dbReference>
<dbReference type="GO" id="GO:0098609">
    <property type="term" value="P:cell-cell adhesion"/>
    <property type="evidence" value="ECO:0000318"/>
    <property type="project" value="GO_Central"/>
</dbReference>
<dbReference type="GO" id="GO:0007160">
    <property type="term" value="P:cell-matrix adhesion"/>
    <property type="evidence" value="ECO:0000315"/>
    <property type="project" value="UniProtKB"/>
</dbReference>
<dbReference type="GO" id="GO:0007229">
    <property type="term" value="P:integrin-mediated signaling pathway"/>
    <property type="evidence" value="ECO:0000315"/>
    <property type="project" value="UniProtKB"/>
</dbReference>
<dbReference type="CDD" id="cd01469">
    <property type="entry name" value="vWA_integrins_alpha_subunit"/>
    <property type="match status" value="1"/>
</dbReference>
<dbReference type="FunFam" id="2.130.10.130:FF:000001">
    <property type="entry name" value="Integrin subunit alpha 10"/>
    <property type="match status" value="1"/>
</dbReference>
<dbReference type="FunFam" id="2.130.10.130:FF:000004">
    <property type="entry name" value="Integrin subunit alpha 10"/>
    <property type="match status" value="1"/>
</dbReference>
<dbReference type="FunFam" id="2.60.40.1460:FF:000008">
    <property type="entry name" value="Integrin subunit alpha 10"/>
    <property type="match status" value="1"/>
</dbReference>
<dbReference type="FunFam" id="2.60.40.1510:FF:000014">
    <property type="entry name" value="Integrin subunit alpha 10"/>
    <property type="match status" value="1"/>
</dbReference>
<dbReference type="FunFam" id="2.60.40.1530:FF:000007">
    <property type="entry name" value="Integrin subunit alpha 10"/>
    <property type="match status" value="1"/>
</dbReference>
<dbReference type="FunFam" id="1.20.5.930:FF:000005">
    <property type="entry name" value="Integrin, alpha 10"/>
    <property type="match status" value="1"/>
</dbReference>
<dbReference type="FunFam" id="3.40.50.410:FF:000012">
    <property type="entry name" value="Integrin, alpha 10"/>
    <property type="match status" value="1"/>
</dbReference>
<dbReference type="Gene3D" id="1.20.5.930">
    <property type="entry name" value="Bicelle-embedded integrin alpha(iib) transmembrane segment"/>
    <property type="match status" value="1"/>
</dbReference>
<dbReference type="Gene3D" id="2.130.10.130">
    <property type="entry name" value="Integrin alpha, N-terminal"/>
    <property type="match status" value="2"/>
</dbReference>
<dbReference type="Gene3D" id="2.60.40.1460">
    <property type="entry name" value="Integrin domains. Chain A, domain 2"/>
    <property type="match status" value="1"/>
</dbReference>
<dbReference type="Gene3D" id="2.60.40.1510">
    <property type="entry name" value="ntegrin, alpha v. Chain A, domain 3"/>
    <property type="match status" value="1"/>
</dbReference>
<dbReference type="Gene3D" id="2.60.40.1530">
    <property type="entry name" value="ntegrin, alpha v. Chain A, domain 4"/>
    <property type="match status" value="1"/>
</dbReference>
<dbReference type="Gene3D" id="3.40.50.410">
    <property type="entry name" value="von Willebrand factor, type A domain"/>
    <property type="match status" value="1"/>
</dbReference>
<dbReference type="InterPro" id="IPR013517">
    <property type="entry name" value="FG-GAP"/>
</dbReference>
<dbReference type="InterPro" id="IPR013519">
    <property type="entry name" value="Int_alpha_beta-p"/>
</dbReference>
<dbReference type="InterPro" id="IPR000413">
    <property type="entry name" value="Integrin_alpha"/>
</dbReference>
<dbReference type="InterPro" id="IPR013649">
    <property type="entry name" value="Integrin_alpha_Ig-like_1"/>
</dbReference>
<dbReference type="InterPro" id="IPR048285">
    <property type="entry name" value="Integrin_alpha_Ig-like_2"/>
</dbReference>
<dbReference type="InterPro" id="IPR028994">
    <property type="entry name" value="Integrin_alpha_N"/>
</dbReference>
<dbReference type="InterPro" id="IPR032695">
    <property type="entry name" value="Integrin_dom_sf"/>
</dbReference>
<dbReference type="InterPro" id="IPR002035">
    <property type="entry name" value="VWF_A"/>
</dbReference>
<dbReference type="InterPro" id="IPR036465">
    <property type="entry name" value="vWFA_dom_sf"/>
</dbReference>
<dbReference type="PANTHER" id="PTHR23220">
    <property type="entry name" value="INTEGRIN ALPHA"/>
    <property type="match status" value="1"/>
</dbReference>
<dbReference type="PANTHER" id="PTHR23220:SF26">
    <property type="entry name" value="INTEGRIN ALPHA-10"/>
    <property type="match status" value="1"/>
</dbReference>
<dbReference type="Pfam" id="PF01839">
    <property type="entry name" value="FG-GAP"/>
    <property type="match status" value="2"/>
</dbReference>
<dbReference type="Pfam" id="PF08441">
    <property type="entry name" value="Integrin_A_Ig_1"/>
    <property type="match status" value="1"/>
</dbReference>
<dbReference type="Pfam" id="PF20805">
    <property type="entry name" value="Integrin_A_Ig_2"/>
    <property type="match status" value="1"/>
</dbReference>
<dbReference type="Pfam" id="PF00092">
    <property type="entry name" value="VWA"/>
    <property type="match status" value="1"/>
</dbReference>
<dbReference type="PRINTS" id="PR01185">
    <property type="entry name" value="INTEGRINA"/>
</dbReference>
<dbReference type="PRINTS" id="PR00453">
    <property type="entry name" value="VWFADOMAIN"/>
</dbReference>
<dbReference type="SMART" id="SM00191">
    <property type="entry name" value="Int_alpha"/>
    <property type="match status" value="5"/>
</dbReference>
<dbReference type="SMART" id="SM00327">
    <property type="entry name" value="VWA"/>
    <property type="match status" value="1"/>
</dbReference>
<dbReference type="SUPFAM" id="SSF69318">
    <property type="entry name" value="Integrin alpha N-terminal domain"/>
    <property type="match status" value="1"/>
</dbReference>
<dbReference type="SUPFAM" id="SSF69179">
    <property type="entry name" value="Integrin domains"/>
    <property type="match status" value="3"/>
</dbReference>
<dbReference type="SUPFAM" id="SSF53300">
    <property type="entry name" value="vWA-like"/>
    <property type="match status" value="1"/>
</dbReference>
<dbReference type="PROSITE" id="PS51470">
    <property type="entry name" value="FG_GAP"/>
    <property type="match status" value="7"/>
</dbReference>
<dbReference type="PROSITE" id="PS50234">
    <property type="entry name" value="VWFA"/>
    <property type="match status" value="1"/>
</dbReference>
<comment type="function">
    <text>Integrin alpha-10/beta-1 is a receptor for collagen.</text>
</comment>
<comment type="subunit">
    <text>Heterodimer of an alpha and a beta subunit. Alpha-10 associates with beta-1.</text>
</comment>
<comment type="subcellular location">
    <subcellularLocation>
        <location>Membrane</location>
        <topology>Single-pass type I membrane protein</topology>
    </subcellularLocation>
</comment>
<comment type="alternative products">
    <event type="alternative splicing"/>
    <isoform>
        <id>O75578-1</id>
        <name>1</name>
        <sequence type="displayed"/>
    </isoform>
    <isoform>
        <id>O75578-2</id>
        <name>2</name>
        <sequence type="described" ref="VSP_013114 VSP_013115"/>
    </isoform>
    <isoform>
        <id>O75578-3</id>
        <name>3</name>
        <sequence type="described" ref="VSP_054483"/>
    </isoform>
</comment>
<comment type="tissue specificity">
    <text>Widely expressed with highest expression in muscle and heart. Found in articular cartilage.</text>
</comment>
<comment type="domain">
    <text>The integrin I-domain (insert) is a VWFA domain. Integrins with I-domains do not undergo protease cleavage.</text>
</comment>
<comment type="similarity">
    <text evidence="8">Belongs to the integrin alpha chain family.</text>
</comment>
<feature type="signal peptide" evidence="3">
    <location>
        <begin position="1"/>
        <end position="22"/>
    </location>
</feature>
<feature type="chain" id="PRO_0000016317" description="Integrin alpha-10">
    <location>
        <begin position="23"/>
        <end position="1167"/>
    </location>
</feature>
<feature type="topological domain" description="Extracellular" evidence="3">
    <location>
        <begin position="23"/>
        <end position="1122"/>
    </location>
</feature>
<feature type="transmembrane region" description="Helical" evidence="3">
    <location>
        <begin position="1123"/>
        <end position="1145"/>
    </location>
</feature>
<feature type="topological domain" description="Cytoplasmic" evidence="3">
    <location>
        <begin position="1146"/>
        <end position="1167"/>
    </location>
</feature>
<feature type="repeat" description="FG-GAP 1" evidence="5">
    <location>
        <begin position="24"/>
        <end position="85"/>
    </location>
</feature>
<feature type="repeat" description="FG-GAP 2" evidence="5">
    <location>
        <begin position="95"/>
        <end position="154"/>
    </location>
</feature>
<feature type="domain" description="VWFA" evidence="4">
    <location>
        <begin position="167"/>
        <end position="350"/>
    </location>
</feature>
<feature type="repeat" description="FG-GAP 3" evidence="5">
    <location>
        <begin position="361"/>
        <end position="412"/>
    </location>
</feature>
<feature type="repeat" description="FG-GAP 4" evidence="5">
    <location>
        <begin position="417"/>
        <end position="470"/>
    </location>
</feature>
<feature type="repeat" description="FG-GAP 5" evidence="5">
    <location>
        <begin position="472"/>
        <end position="534"/>
    </location>
</feature>
<feature type="repeat" description="FG-GAP 6" evidence="5">
    <location>
        <begin position="535"/>
        <end position="593"/>
    </location>
</feature>
<feature type="repeat" description="FG-GAP 7" evidence="5">
    <location>
        <begin position="597"/>
        <end position="657"/>
    </location>
</feature>
<feature type="binding site" evidence="2">
    <location>
        <position position="494"/>
    </location>
    <ligand>
        <name>Ca(2+)</name>
        <dbReference type="ChEBI" id="CHEBI:29108"/>
        <label>1</label>
    </ligand>
</feature>
<feature type="binding site" evidence="2">
    <location>
        <position position="496"/>
    </location>
    <ligand>
        <name>Ca(2+)</name>
        <dbReference type="ChEBI" id="CHEBI:29108"/>
        <label>1</label>
    </ligand>
</feature>
<feature type="binding site" evidence="2">
    <location>
        <position position="498"/>
    </location>
    <ligand>
        <name>Ca(2+)</name>
        <dbReference type="ChEBI" id="CHEBI:29108"/>
        <label>1</label>
    </ligand>
</feature>
<feature type="binding site" evidence="2">
    <location>
        <position position="502"/>
    </location>
    <ligand>
        <name>Ca(2+)</name>
        <dbReference type="ChEBI" id="CHEBI:29108"/>
        <label>1</label>
    </ligand>
</feature>
<feature type="binding site" evidence="2">
    <location>
        <position position="558"/>
    </location>
    <ligand>
        <name>Ca(2+)</name>
        <dbReference type="ChEBI" id="CHEBI:29108"/>
        <label>2</label>
    </ligand>
</feature>
<feature type="binding site" evidence="2">
    <location>
        <position position="560"/>
    </location>
    <ligand>
        <name>Ca(2+)</name>
        <dbReference type="ChEBI" id="CHEBI:29108"/>
        <label>2</label>
    </ligand>
</feature>
<feature type="binding site" evidence="2">
    <location>
        <position position="562"/>
    </location>
    <ligand>
        <name>Ca(2+)</name>
        <dbReference type="ChEBI" id="CHEBI:29108"/>
        <label>2</label>
    </ligand>
</feature>
<feature type="binding site" evidence="2">
    <location>
        <position position="566"/>
    </location>
    <ligand>
        <name>Ca(2+)</name>
        <dbReference type="ChEBI" id="CHEBI:29108"/>
        <label>2</label>
    </ligand>
</feature>
<feature type="binding site" evidence="2">
    <location>
        <position position="620"/>
    </location>
    <ligand>
        <name>Ca(2+)</name>
        <dbReference type="ChEBI" id="CHEBI:29108"/>
        <label>3</label>
    </ligand>
</feature>
<feature type="binding site" evidence="2">
    <location>
        <position position="622"/>
    </location>
    <ligand>
        <name>Ca(2+)</name>
        <dbReference type="ChEBI" id="CHEBI:29108"/>
        <label>3</label>
    </ligand>
</feature>
<feature type="binding site" evidence="2">
    <location>
        <position position="624"/>
    </location>
    <ligand>
        <name>Ca(2+)</name>
        <dbReference type="ChEBI" id="CHEBI:29108"/>
        <label>3</label>
    </ligand>
</feature>
<feature type="binding site" evidence="2">
    <location>
        <position position="628"/>
    </location>
    <ligand>
        <name>Ca(2+)</name>
        <dbReference type="ChEBI" id="CHEBI:29108"/>
        <label>3</label>
    </ligand>
</feature>
<feature type="glycosylation site" description="N-linked (GlcNAc...) asparagine" evidence="3">
    <location>
        <position position="98"/>
    </location>
</feature>
<feature type="glycosylation site" description="N-linked (GlcNAc...) asparagine" evidence="3">
    <location>
        <position position="234"/>
    </location>
</feature>
<feature type="glycosylation site" description="N-linked (GlcNAc...) asparagine" evidence="3">
    <location>
        <position position="336"/>
    </location>
</feature>
<feature type="glycosylation site" description="N-linked (GlcNAc...) asparagine" evidence="3">
    <location>
        <position position="364"/>
    </location>
</feature>
<feature type="glycosylation site" description="N-linked (GlcNAc...) asparagine" evidence="3">
    <location>
        <position position="733"/>
    </location>
</feature>
<feature type="glycosylation site" description="N-linked (GlcNAc...) asparagine" evidence="3">
    <location>
        <position position="763"/>
    </location>
</feature>
<feature type="glycosylation site" description="N-linked (GlcNAc...) asparagine" evidence="3">
    <location>
        <position position="839"/>
    </location>
</feature>
<feature type="glycosylation site" description="N-linked (GlcNAc...) asparagine" evidence="3">
    <location>
        <position position="921"/>
    </location>
</feature>
<feature type="glycosylation site" description="N-linked (GlcNAc...) asparagine" evidence="3">
    <location>
        <position position="1011"/>
    </location>
</feature>
<feature type="glycosylation site" description="N-linked (GlcNAc...) asparagine" evidence="3">
    <location>
        <position position="1018"/>
    </location>
</feature>
<feature type="glycosylation site" description="N-linked (GlcNAc...) asparagine" evidence="3">
    <location>
        <position position="1039"/>
    </location>
</feature>
<feature type="disulfide bond" evidence="1">
    <location>
        <begin position="76"/>
        <end position="86"/>
    </location>
</feature>
<feature type="disulfide bond" evidence="1">
    <location>
        <begin position="666"/>
        <end position="675"/>
    </location>
</feature>
<feature type="disulfide bond" evidence="1">
    <location>
        <begin position="681"/>
        <end position="736"/>
    </location>
</feature>
<feature type="disulfide bond" evidence="1">
    <location>
        <begin position="789"/>
        <end position="795"/>
    </location>
</feature>
<feature type="splice variant" id="VSP_054483" description="In isoform 3." evidence="7">
    <location>
        <begin position="19"/>
        <end position="161"/>
    </location>
</feature>
<feature type="splice variant" id="VSP_013114" description="In isoform 2." evidence="6">
    <original>AC</original>
    <variation>VS</variation>
    <location>
        <begin position="123"/>
        <end position="124"/>
    </location>
</feature>
<feature type="splice variant" id="VSP_013115" description="In isoform 2." evidence="6">
    <location>
        <begin position="125"/>
        <end position="1167"/>
    </location>
</feature>
<feature type="sequence variant" id="VAR_027768" description="In dbSNP:rs6665210.">
    <original>R</original>
    <variation>Q</variation>
    <location>
        <position position="381"/>
    </location>
</feature>
<feature type="sequence variant" id="VAR_034026" description="In dbSNP:rs36073645.">
    <original>R</original>
    <variation>W</variation>
    <location>
        <position position="668"/>
    </location>
</feature>
<feature type="sequence variant" id="VAR_027769" description="In dbSNP:rs2274618.">
    <original>R</original>
    <variation>H</variation>
    <location>
        <position position="691"/>
    </location>
</feature>
<feature type="sequence variant" id="VAR_034027" description="In dbSNP:rs35515885.">
    <original>A</original>
    <variation>T</variation>
    <location>
        <position position="702"/>
    </location>
</feature>
<feature type="sequence variant" id="VAR_027770" description="In dbSNP:rs2274616.">
    <original>R</original>
    <variation>Q</variation>
    <location>
        <position position="725"/>
    </location>
</feature>
<feature type="sequence conflict" description="In Ref. 1; AAC31952." evidence="8" ref="1">
    <original>L</original>
    <variation>I</variation>
    <location>
        <position position="844"/>
    </location>
</feature>
<feature type="sequence conflict" description="In Ref. 1; AAC31952." evidence="8" ref="1">
    <original>V</original>
    <variation>G</variation>
    <location>
        <position position="909"/>
    </location>
</feature>
<feature type="sequence conflict" description="In Ref. 1; AAC31952." evidence="8" ref="1">
    <original>D</original>
    <variation>E</variation>
    <location>
        <position position="926"/>
    </location>
</feature>
<sequence>MELPFVTHLFLPLVFLTGLCSPFNLDEHHPRLFPGPPEAEFGYSVLQHVGGGQRWMLVGAPWDGPSGDRRGDVYRCPVGGAHNAPCAKGHLGDYQLGNSSHPAVNMHLGMSLLETDGDGGFMACAPLWSRACGSSVFSSGICARVDASFQPQGSLAPTAQRCPTYMDVVIVLDGSNSIYPWSEVQTFLRRLVGKLFIDPEQIQVGLVQYGESPVHEWSLGDFRTKEEVVRAAKNLSRREGRETKTAQAIMVACTEGFSQSHGGRPEAARLLVVVTDGESHDGEELPAALKACEAGRVTRYGIAVLGHYLRRQRDPSSFLREIRTIASDPDERFFFNVTDEAALTDIVDALGDRIFGLEGSHAENESSFGLEMSQIGFSTHRLKDGILFGMVGAYDWGGSVLWLEGGHRLFPPRMALEDEFPPALQNHAAYLGYSVSSMLLRGGRRLFLSGAPRFRHRGKVIAFQLKKDGAVRVAQSLQGEQIGSYFGSELCPLDTDRDGTTDVLLVAAPMFLGPQNKETGRVYVYLVGQQSLLTLQGTLQPEPPQDARFGFAMGALPDLNQDGFADVAVGAPLEDGHQGALYLYHGTQSGVRPHPAQRIAAASMPHALSYFGRSVDGRLDLDGDDLVDVAVGAQGAAILLSSRPIVHLTPSLEVTPQAISVVQRDCRRRGQEAVCLTAALCFQVTSRTPGRWDHQFYMRFTASLDEWTAGARAAFDGSGQRLSPRRLRLSVGNVTCEQLHFHVLDTSDYLRPVALTVTFALDNTTKPGPVLNEGSPTSIQKLVPFSKDCGPDNECVTDLVLQVNMDIRGSRKAPFVVRGGRRKVLVSTTLENRKENAYNTSLSLIFSRNLHLASLTPQRESPIKVECAAPSAHARLCSVGHPVFQTGAKVTFLLEFEFSCSSLLSQVFVKLTASSDSLERNGTLQDNTAQTSAYIQYEPHLLFSSESTLHRYEVHPYGTLPVGPGPEFKTTLRVQNLGCYVVSGLIISALLPAVAHGGNYFLSLSQVITNNASCIVQNLTEPPGPPVHPEELQHTNRLNGSNTQCQVVRCHLGQLAKGTEVSVGLLRLVHNEFFRRAKFKSLTVVSTFELGTEEGSVLQLTEASRWSESLLEVVQTRPILISLWILIGSVLGGLLLLALLVFCLWKLGFFAHKKIPEEEKREEKLEQ</sequence>
<name>ITA10_HUMAN</name>
<gene>
    <name type="primary">ITGA10</name>
    <name type="ORF">UNQ468/PRO827</name>
</gene>
<accession>O75578</accession>
<accession>B2RAM4</accession>
<accession>B2RTV5</accession>
<accession>Q6UXJ6</accession>
<accession>Q9UHZ8</accession>
<keyword id="KW-0025">Alternative splicing</keyword>
<keyword id="KW-0106">Calcium</keyword>
<keyword id="KW-0130">Cell adhesion</keyword>
<keyword id="KW-1015">Disulfide bond</keyword>
<keyword id="KW-0325">Glycoprotein</keyword>
<keyword id="KW-0401">Integrin</keyword>
<keyword id="KW-0460">Magnesium</keyword>
<keyword id="KW-0472">Membrane</keyword>
<keyword id="KW-0479">Metal-binding</keyword>
<keyword id="KW-1267">Proteomics identification</keyword>
<keyword id="KW-0675">Receptor</keyword>
<keyword id="KW-1185">Reference proteome</keyword>
<keyword id="KW-0677">Repeat</keyword>
<keyword id="KW-0732">Signal</keyword>
<keyword id="KW-0812">Transmembrane</keyword>
<keyword id="KW-1133">Transmembrane helix</keyword>
<protein>
    <recommendedName>
        <fullName>Integrin alpha-10</fullName>
    </recommendedName>
</protein>
<evidence type="ECO:0000250" key="1"/>
<evidence type="ECO:0000250" key="2">
    <source>
        <dbReference type="UniProtKB" id="P08648"/>
    </source>
</evidence>
<evidence type="ECO:0000255" key="3"/>
<evidence type="ECO:0000255" key="4">
    <source>
        <dbReference type="PROSITE-ProRule" id="PRU00219"/>
    </source>
</evidence>
<evidence type="ECO:0000255" key="5">
    <source>
        <dbReference type="PROSITE-ProRule" id="PRU00803"/>
    </source>
</evidence>
<evidence type="ECO:0000303" key="6">
    <source>
    </source>
</evidence>
<evidence type="ECO:0000303" key="7">
    <source>
    </source>
</evidence>
<evidence type="ECO:0000305" key="8"/>
<reference key="1">
    <citation type="journal article" date="1998" name="J. Biol. Chem.">
        <title>Isolation, cloning, and sequence analysis of the integrin subunit alpha10, a beta1-associated collagen binding integrin expressed on chondrocytes.</title>
        <authorList>
            <person name="Camper L."/>
            <person name="Hellman U."/>
            <person name="Lundgren-Aakerlund E."/>
        </authorList>
    </citation>
    <scope>NUCLEOTIDE SEQUENCE [MRNA] (ISOFORM 1)</scope>
    <source>
        <tissue>Articular chondrocyte</tissue>
    </source>
</reference>
<reference key="2">
    <citation type="journal article" date="1999" name="Cytogenet. Cell Genet.">
        <title>The integrin alpha10 subunit: expression pattern, partial gene structure, and chromosomal localization.</title>
        <authorList>
            <person name="Lehnert K."/>
            <person name="Ni J."/>
            <person name="Leung E."/>
            <person name="Gough S.M."/>
            <person name="Morris C.M."/>
            <person name="Liu D."/>
            <person name="Wang S.-X."/>
            <person name="Langley R."/>
            <person name="Krissansen G.W."/>
        </authorList>
    </citation>
    <scope>NUCLEOTIDE SEQUENCE [MRNA] (ISOFORM 1)</scope>
    <source>
        <tissue>Endothelial cell</tissue>
        <tissue>Heart</tissue>
    </source>
</reference>
<reference key="3">
    <citation type="journal article" date="2003" name="Genome Res.">
        <title>The secreted protein discovery initiative (SPDI), a large-scale effort to identify novel human secreted and transmembrane proteins: a bioinformatics assessment.</title>
        <authorList>
            <person name="Clark H.F."/>
            <person name="Gurney A.L."/>
            <person name="Abaya E."/>
            <person name="Baker K."/>
            <person name="Baldwin D.T."/>
            <person name="Brush J."/>
            <person name="Chen J."/>
            <person name="Chow B."/>
            <person name="Chui C."/>
            <person name="Crowley C."/>
            <person name="Currell B."/>
            <person name="Deuel B."/>
            <person name="Dowd P."/>
            <person name="Eaton D."/>
            <person name="Foster J.S."/>
            <person name="Grimaldi C."/>
            <person name="Gu Q."/>
            <person name="Hass P.E."/>
            <person name="Heldens S."/>
            <person name="Huang A."/>
            <person name="Kim H.S."/>
            <person name="Klimowski L."/>
            <person name="Jin Y."/>
            <person name="Johnson S."/>
            <person name="Lee J."/>
            <person name="Lewis L."/>
            <person name="Liao D."/>
            <person name="Mark M.R."/>
            <person name="Robbie E."/>
            <person name="Sanchez C."/>
            <person name="Schoenfeld J."/>
            <person name="Seshagiri S."/>
            <person name="Simmons L."/>
            <person name="Singh J."/>
            <person name="Smith V."/>
            <person name="Stinson J."/>
            <person name="Vagts A."/>
            <person name="Vandlen R.L."/>
            <person name="Watanabe C."/>
            <person name="Wieand D."/>
            <person name="Woods K."/>
            <person name="Xie M.-H."/>
            <person name="Yansura D.G."/>
            <person name="Yi S."/>
            <person name="Yu G."/>
            <person name="Yuan J."/>
            <person name="Zhang M."/>
            <person name="Zhang Z."/>
            <person name="Goddard A.D."/>
            <person name="Wood W.I."/>
            <person name="Godowski P.J."/>
            <person name="Gray A.M."/>
        </authorList>
    </citation>
    <scope>NUCLEOTIDE SEQUENCE [LARGE SCALE MRNA] (ISOFORM 2)</scope>
</reference>
<reference key="4">
    <citation type="journal article" date="2004" name="Nat. Genet.">
        <title>Complete sequencing and characterization of 21,243 full-length human cDNAs.</title>
        <authorList>
            <person name="Ota T."/>
            <person name="Suzuki Y."/>
            <person name="Nishikawa T."/>
            <person name="Otsuki T."/>
            <person name="Sugiyama T."/>
            <person name="Irie R."/>
            <person name="Wakamatsu A."/>
            <person name="Hayashi K."/>
            <person name="Sato H."/>
            <person name="Nagai K."/>
            <person name="Kimura K."/>
            <person name="Makita H."/>
            <person name="Sekine M."/>
            <person name="Obayashi M."/>
            <person name="Nishi T."/>
            <person name="Shibahara T."/>
            <person name="Tanaka T."/>
            <person name="Ishii S."/>
            <person name="Yamamoto J."/>
            <person name="Saito K."/>
            <person name="Kawai Y."/>
            <person name="Isono Y."/>
            <person name="Nakamura Y."/>
            <person name="Nagahari K."/>
            <person name="Murakami K."/>
            <person name="Yasuda T."/>
            <person name="Iwayanagi T."/>
            <person name="Wagatsuma M."/>
            <person name="Shiratori A."/>
            <person name="Sudo H."/>
            <person name="Hosoiri T."/>
            <person name="Kaku Y."/>
            <person name="Kodaira H."/>
            <person name="Kondo H."/>
            <person name="Sugawara M."/>
            <person name="Takahashi M."/>
            <person name="Kanda K."/>
            <person name="Yokoi T."/>
            <person name="Furuya T."/>
            <person name="Kikkawa E."/>
            <person name="Omura Y."/>
            <person name="Abe K."/>
            <person name="Kamihara K."/>
            <person name="Katsuta N."/>
            <person name="Sato K."/>
            <person name="Tanikawa M."/>
            <person name="Yamazaki M."/>
            <person name="Ninomiya K."/>
            <person name="Ishibashi T."/>
            <person name="Yamashita H."/>
            <person name="Murakawa K."/>
            <person name="Fujimori K."/>
            <person name="Tanai H."/>
            <person name="Kimata M."/>
            <person name="Watanabe M."/>
            <person name="Hiraoka S."/>
            <person name="Chiba Y."/>
            <person name="Ishida S."/>
            <person name="Ono Y."/>
            <person name="Takiguchi S."/>
            <person name="Watanabe S."/>
            <person name="Yosida M."/>
            <person name="Hotuta T."/>
            <person name="Kusano J."/>
            <person name="Kanehori K."/>
            <person name="Takahashi-Fujii A."/>
            <person name="Hara H."/>
            <person name="Tanase T.-O."/>
            <person name="Nomura Y."/>
            <person name="Togiya S."/>
            <person name="Komai F."/>
            <person name="Hara R."/>
            <person name="Takeuchi K."/>
            <person name="Arita M."/>
            <person name="Imose N."/>
            <person name="Musashino K."/>
            <person name="Yuuki H."/>
            <person name="Oshima A."/>
            <person name="Sasaki N."/>
            <person name="Aotsuka S."/>
            <person name="Yoshikawa Y."/>
            <person name="Matsunawa H."/>
            <person name="Ichihara T."/>
            <person name="Shiohata N."/>
            <person name="Sano S."/>
            <person name="Moriya S."/>
            <person name="Momiyama H."/>
            <person name="Satoh N."/>
            <person name="Takami S."/>
            <person name="Terashima Y."/>
            <person name="Suzuki O."/>
            <person name="Nakagawa S."/>
            <person name="Senoh A."/>
            <person name="Mizoguchi H."/>
            <person name="Goto Y."/>
            <person name="Shimizu F."/>
            <person name="Wakebe H."/>
            <person name="Hishigaki H."/>
            <person name="Watanabe T."/>
            <person name="Sugiyama A."/>
            <person name="Takemoto M."/>
            <person name="Kawakami B."/>
            <person name="Yamazaki M."/>
            <person name="Watanabe K."/>
            <person name="Kumagai A."/>
            <person name="Itakura S."/>
            <person name="Fukuzumi Y."/>
            <person name="Fujimori Y."/>
            <person name="Komiyama M."/>
            <person name="Tashiro H."/>
            <person name="Tanigami A."/>
            <person name="Fujiwara T."/>
            <person name="Ono T."/>
            <person name="Yamada K."/>
            <person name="Fujii Y."/>
            <person name="Ozaki K."/>
            <person name="Hirao M."/>
            <person name="Ohmori Y."/>
            <person name="Kawabata A."/>
            <person name="Hikiji T."/>
            <person name="Kobatake N."/>
            <person name="Inagaki H."/>
            <person name="Ikema Y."/>
            <person name="Okamoto S."/>
            <person name="Okitani R."/>
            <person name="Kawakami T."/>
            <person name="Noguchi S."/>
            <person name="Itoh T."/>
            <person name="Shigeta K."/>
            <person name="Senba T."/>
            <person name="Matsumura K."/>
            <person name="Nakajima Y."/>
            <person name="Mizuno T."/>
            <person name="Morinaga M."/>
            <person name="Sasaki M."/>
            <person name="Togashi T."/>
            <person name="Oyama M."/>
            <person name="Hata H."/>
            <person name="Watanabe M."/>
            <person name="Komatsu T."/>
            <person name="Mizushima-Sugano J."/>
            <person name="Satoh T."/>
            <person name="Shirai Y."/>
            <person name="Takahashi Y."/>
            <person name="Nakagawa K."/>
            <person name="Okumura K."/>
            <person name="Nagase T."/>
            <person name="Nomura N."/>
            <person name="Kikuchi H."/>
            <person name="Masuho Y."/>
            <person name="Yamashita R."/>
            <person name="Nakai K."/>
            <person name="Yada T."/>
            <person name="Nakamura Y."/>
            <person name="Ohara O."/>
            <person name="Isogai T."/>
            <person name="Sugano S."/>
        </authorList>
    </citation>
    <scope>NUCLEOTIDE SEQUENCE [LARGE SCALE MRNA] (ISOFORM 1)</scope>
    <source>
        <tissue>Trachea</tissue>
    </source>
</reference>
<reference key="5">
    <citation type="journal article" date="2006" name="Nature">
        <title>The DNA sequence and biological annotation of human chromosome 1.</title>
        <authorList>
            <person name="Gregory S.G."/>
            <person name="Barlow K.F."/>
            <person name="McLay K.E."/>
            <person name="Kaul R."/>
            <person name="Swarbreck D."/>
            <person name="Dunham A."/>
            <person name="Scott C.E."/>
            <person name="Howe K.L."/>
            <person name="Woodfine K."/>
            <person name="Spencer C.C.A."/>
            <person name="Jones M.C."/>
            <person name="Gillson C."/>
            <person name="Searle S."/>
            <person name="Zhou Y."/>
            <person name="Kokocinski F."/>
            <person name="McDonald L."/>
            <person name="Evans R."/>
            <person name="Phillips K."/>
            <person name="Atkinson A."/>
            <person name="Cooper R."/>
            <person name="Jones C."/>
            <person name="Hall R.E."/>
            <person name="Andrews T.D."/>
            <person name="Lloyd C."/>
            <person name="Ainscough R."/>
            <person name="Almeida J.P."/>
            <person name="Ambrose K.D."/>
            <person name="Anderson F."/>
            <person name="Andrew R.W."/>
            <person name="Ashwell R.I.S."/>
            <person name="Aubin K."/>
            <person name="Babbage A.K."/>
            <person name="Bagguley C.L."/>
            <person name="Bailey J."/>
            <person name="Beasley H."/>
            <person name="Bethel G."/>
            <person name="Bird C.P."/>
            <person name="Bray-Allen S."/>
            <person name="Brown J.Y."/>
            <person name="Brown A.J."/>
            <person name="Buckley D."/>
            <person name="Burton J."/>
            <person name="Bye J."/>
            <person name="Carder C."/>
            <person name="Chapman J.C."/>
            <person name="Clark S.Y."/>
            <person name="Clarke G."/>
            <person name="Clee C."/>
            <person name="Cobley V."/>
            <person name="Collier R.E."/>
            <person name="Corby N."/>
            <person name="Coville G.J."/>
            <person name="Davies J."/>
            <person name="Deadman R."/>
            <person name="Dunn M."/>
            <person name="Earthrowl M."/>
            <person name="Ellington A.G."/>
            <person name="Errington H."/>
            <person name="Frankish A."/>
            <person name="Frankland J."/>
            <person name="French L."/>
            <person name="Garner P."/>
            <person name="Garnett J."/>
            <person name="Gay L."/>
            <person name="Ghori M.R.J."/>
            <person name="Gibson R."/>
            <person name="Gilby L.M."/>
            <person name="Gillett W."/>
            <person name="Glithero R.J."/>
            <person name="Grafham D.V."/>
            <person name="Griffiths C."/>
            <person name="Griffiths-Jones S."/>
            <person name="Grocock R."/>
            <person name="Hammond S."/>
            <person name="Harrison E.S.I."/>
            <person name="Hart E."/>
            <person name="Haugen E."/>
            <person name="Heath P.D."/>
            <person name="Holmes S."/>
            <person name="Holt K."/>
            <person name="Howden P.J."/>
            <person name="Hunt A.R."/>
            <person name="Hunt S.E."/>
            <person name="Hunter G."/>
            <person name="Isherwood J."/>
            <person name="James R."/>
            <person name="Johnson C."/>
            <person name="Johnson D."/>
            <person name="Joy A."/>
            <person name="Kay M."/>
            <person name="Kershaw J.K."/>
            <person name="Kibukawa M."/>
            <person name="Kimberley A.M."/>
            <person name="King A."/>
            <person name="Knights A.J."/>
            <person name="Lad H."/>
            <person name="Laird G."/>
            <person name="Lawlor S."/>
            <person name="Leongamornlert D.A."/>
            <person name="Lloyd D.M."/>
            <person name="Loveland J."/>
            <person name="Lovell J."/>
            <person name="Lush M.J."/>
            <person name="Lyne R."/>
            <person name="Martin S."/>
            <person name="Mashreghi-Mohammadi M."/>
            <person name="Matthews L."/>
            <person name="Matthews N.S.W."/>
            <person name="McLaren S."/>
            <person name="Milne S."/>
            <person name="Mistry S."/>
            <person name="Moore M.J.F."/>
            <person name="Nickerson T."/>
            <person name="O'Dell C.N."/>
            <person name="Oliver K."/>
            <person name="Palmeiri A."/>
            <person name="Palmer S.A."/>
            <person name="Parker A."/>
            <person name="Patel D."/>
            <person name="Pearce A.V."/>
            <person name="Peck A.I."/>
            <person name="Pelan S."/>
            <person name="Phelps K."/>
            <person name="Phillimore B.J."/>
            <person name="Plumb R."/>
            <person name="Rajan J."/>
            <person name="Raymond C."/>
            <person name="Rouse G."/>
            <person name="Saenphimmachak C."/>
            <person name="Sehra H.K."/>
            <person name="Sheridan E."/>
            <person name="Shownkeen R."/>
            <person name="Sims S."/>
            <person name="Skuce C.D."/>
            <person name="Smith M."/>
            <person name="Steward C."/>
            <person name="Subramanian S."/>
            <person name="Sycamore N."/>
            <person name="Tracey A."/>
            <person name="Tromans A."/>
            <person name="Van Helmond Z."/>
            <person name="Wall M."/>
            <person name="Wallis J.M."/>
            <person name="White S."/>
            <person name="Whitehead S.L."/>
            <person name="Wilkinson J.E."/>
            <person name="Willey D.L."/>
            <person name="Williams H."/>
            <person name="Wilming L."/>
            <person name="Wray P.W."/>
            <person name="Wu Z."/>
            <person name="Coulson A."/>
            <person name="Vaudin M."/>
            <person name="Sulston J.E."/>
            <person name="Durbin R.M."/>
            <person name="Hubbard T."/>
            <person name="Wooster R."/>
            <person name="Dunham I."/>
            <person name="Carter N.P."/>
            <person name="McVean G."/>
            <person name="Ross M.T."/>
            <person name="Harrow J."/>
            <person name="Olson M.V."/>
            <person name="Beck S."/>
            <person name="Rogers J."/>
            <person name="Bentley D.R."/>
        </authorList>
    </citation>
    <scope>NUCLEOTIDE SEQUENCE [LARGE SCALE GENOMIC DNA]</scope>
</reference>
<reference key="6">
    <citation type="submission" date="2005-07" db="EMBL/GenBank/DDBJ databases">
        <authorList>
            <person name="Mural R.J."/>
            <person name="Istrail S."/>
            <person name="Sutton G.G."/>
            <person name="Florea L."/>
            <person name="Halpern A.L."/>
            <person name="Mobarry C.M."/>
            <person name="Lippert R."/>
            <person name="Walenz B."/>
            <person name="Shatkay H."/>
            <person name="Dew I."/>
            <person name="Miller J.R."/>
            <person name="Flanigan M.J."/>
            <person name="Edwards N.J."/>
            <person name="Bolanos R."/>
            <person name="Fasulo D."/>
            <person name="Halldorsson B.V."/>
            <person name="Hannenhalli S."/>
            <person name="Turner R."/>
            <person name="Yooseph S."/>
            <person name="Lu F."/>
            <person name="Nusskern D.R."/>
            <person name="Shue B.C."/>
            <person name="Zheng X.H."/>
            <person name="Zhong F."/>
            <person name="Delcher A.L."/>
            <person name="Huson D.H."/>
            <person name="Kravitz S.A."/>
            <person name="Mouchard L."/>
            <person name="Reinert K."/>
            <person name="Remington K.A."/>
            <person name="Clark A.G."/>
            <person name="Waterman M.S."/>
            <person name="Eichler E.E."/>
            <person name="Adams M.D."/>
            <person name="Hunkapiller M.W."/>
            <person name="Myers E.W."/>
            <person name="Venter J.C."/>
        </authorList>
    </citation>
    <scope>NUCLEOTIDE SEQUENCE [LARGE SCALE GENOMIC DNA]</scope>
</reference>
<reference key="7">
    <citation type="journal article" date="2004" name="Genome Res.">
        <title>The status, quality, and expansion of the NIH full-length cDNA project: the Mammalian Gene Collection (MGC).</title>
        <authorList>
            <consortium name="The MGC Project Team"/>
        </authorList>
    </citation>
    <scope>NUCLEOTIDE SEQUENCE [LARGE SCALE MRNA] (ISOFORM 3)</scope>
    <source>
        <tissue>Brain</tissue>
    </source>
</reference>
<organism>
    <name type="scientific">Homo sapiens</name>
    <name type="common">Human</name>
    <dbReference type="NCBI Taxonomy" id="9606"/>
    <lineage>
        <taxon>Eukaryota</taxon>
        <taxon>Metazoa</taxon>
        <taxon>Chordata</taxon>
        <taxon>Craniata</taxon>
        <taxon>Vertebrata</taxon>
        <taxon>Euteleostomi</taxon>
        <taxon>Mammalia</taxon>
        <taxon>Eutheria</taxon>
        <taxon>Euarchontoglires</taxon>
        <taxon>Primates</taxon>
        <taxon>Haplorrhini</taxon>
        <taxon>Catarrhini</taxon>
        <taxon>Hominidae</taxon>
        <taxon>Homo</taxon>
    </lineage>
</organism>